<proteinExistence type="inferred from homology"/>
<evidence type="ECO:0000305" key="1"/>
<name>Y1558_STAAC</name>
<reference key="1">
    <citation type="journal article" date="2005" name="J. Bacteriol.">
        <title>Insights on evolution of virulence and resistance from the complete genome analysis of an early methicillin-resistant Staphylococcus aureus strain and a biofilm-producing methicillin-resistant Staphylococcus epidermidis strain.</title>
        <authorList>
            <person name="Gill S.R."/>
            <person name="Fouts D.E."/>
            <person name="Archer G.L."/>
            <person name="Mongodin E.F."/>
            <person name="DeBoy R.T."/>
            <person name="Ravel J."/>
            <person name="Paulsen I.T."/>
            <person name="Kolonay J.F."/>
            <person name="Brinkac L.M."/>
            <person name="Beanan M.J."/>
            <person name="Dodson R.J."/>
            <person name="Daugherty S.C."/>
            <person name="Madupu R."/>
            <person name="Angiuoli S.V."/>
            <person name="Durkin A.S."/>
            <person name="Haft D.H."/>
            <person name="Vamathevan J.J."/>
            <person name="Khouri H."/>
            <person name="Utterback T.R."/>
            <person name="Lee C."/>
            <person name="Dimitrov G."/>
            <person name="Jiang L."/>
            <person name="Qin H."/>
            <person name="Weidman J."/>
            <person name="Tran K."/>
            <person name="Kang K.H."/>
            <person name="Hance I.R."/>
            <person name="Nelson K.E."/>
            <person name="Fraser C.M."/>
        </authorList>
    </citation>
    <scope>NUCLEOTIDE SEQUENCE [LARGE SCALE GENOMIC DNA]</scope>
    <source>
        <strain>COL</strain>
    </source>
</reference>
<gene>
    <name type="ordered locus">SACOL1558</name>
</gene>
<feature type="chain" id="PRO_0000271998" description="Bacilliredoxin SACOL1558">
    <location>
        <begin position="1"/>
        <end position="145"/>
    </location>
</feature>
<dbReference type="EMBL" id="CP000046">
    <property type="protein sequence ID" value="AAW36750.1"/>
    <property type="molecule type" value="Genomic_DNA"/>
</dbReference>
<dbReference type="SMR" id="Q5HFQ8"/>
<dbReference type="KEGG" id="sac:SACOL1558"/>
<dbReference type="HOGENOM" id="CLU_132521_0_0_9"/>
<dbReference type="Proteomes" id="UP000000530">
    <property type="component" value="Chromosome"/>
</dbReference>
<dbReference type="GO" id="GO:0045454">
    <property type="term" value="P:cell redox homeostasis"/>
    <property type="evidence" value="ECO:0000250"/>
    <property type="project" value="UniProtKB"/>
</dbReference>
<dbReference type="Gene3D" id="3.40.30.10">
    <property type="entry name" value="Glutaredoxin"/>
    <property type="match status" value="1"/>
</dbReference>
<dbReference type="InterPro" id="IPR009474">
    <property type="entry name" value="BrxB/BrxA"/>
</dbReference>
<dbReference type="NCBIfam" id="TIGR04191">
    <property type="entry name" value="YphP_YqiW"/>
    <property type="match status" value="1"/>
</dbReference>
<dbReference type="PANTHER" id="PTHR40052:SF1">
    <property type="entry name" value="BACILLIREDOXIN BRXB"/>
    <property type="match status" value="1"/>
</dbReference>
<dbReference type="PANTHER" id="PTHR40052">
    <property type="entry name" value="UPF0403 PROTEIN YQIW-RELATED"/>
    <property type="match status" value="1"/>
</dbReference>
<dbReference type="Pfam" id="PF06491">
    <property type="entry name" value="Disulph_isomer"/>
    <property type="match status" value="1"/>
</dbReference>
<comment type="similarity">
    <text evidence="1">Belongs to the bacilliredoxin family.</text>
</comment>
<protein>
    <recommendedName>
        <fullName evidence="1">Bacilliredoxin SACOL1558</fullName>
    </recommendedName>
</protein>
<sequence length="145" mass="16221">MDMNFDLYMNGVVEQARNEIESAGYEQLTTAEDVDKVLKQDGTTLVMINSVCGCAGGIARPAASHALHYDVLPDRLVTVFAGQDKEATQRAREYFEGYAPSSPSFALVKDGKITEMIERHQIEGHDVMNVINQLQTLFNKYCEER</sequence>
<organism>
    <name type="scientific">Staphylococcus aureus (strain COL)</name>
    <dbReference type="NCBI Taxonomy" id="93062"/>
    <lineage>
        <taxon>Bacteria</taxon>
        <taxon>Bacillati</taxon>
        <taxon>Bacillota</taxon>
        <taxon>Bacilli</taxon>
        <taxon>Bacillales</taxon>
        <taxon>Staphylococcaceae</taxon>
        <taxon>Staphylococcus</taxon>
    </lineage>
</organism>
<accession>Q5HFQ8</accession>